<organism>
    <name type="scientific">Methylobacterium radiotolerans (strain ATCC 27329 / DSM 1819 / JCM 2831 / NBRC 15690 / NCIMB 10815 / 0-1)</name>
    <dbReference type="NCBI Taxonomy" id="426355"/>
    <lineage>
        <taxon>Bacteria</taxon>
        <taxon>Pseudomonadati</taxon>
        <taxon>Pseudomonadota</taxon>
        <taxon>Alphaproteobacteria</taxon>
        <taxon>Hyphomicrobiales</taxon>
        <taxon>Methylobacteriaceae</taxon>
        <taxon>Methylobacterium</taxon>
    </lineage>
</organism>
<proteinExistence type="inferred from homology"/>
<feature type="chain" id="PRO_1000128140" description="Small ribosomal subunit protein uS9">
    <location>
        <begin position="1"/>
        <end position="161"/>
    </location>
</feature>
<dbReference type="EMBL" id="CP001001">
    <property type="protein sequence ID" value="ACB23186.1"/>
    <property type="molecule type" value="Genomic_DNA"/>
</dbReference>
<dbReference type="RefSeq" id="WP_012318176.1">
    <property type="nucleotide sequence ID" value="NC_010505.1"/>
</dbReference>
<dbReference type="SMR" id="B1M201"/>
<dbReference type="STRING" id="426355.Mrad2831_1179"/>
<dbReference type="GeneID" id="6137197"/>
<dbReference type="KEGG" id="mrd:Mrad2831_1179"/>
<dbReference type="eggNOG" id="COG0103">
    <property type="taxonomic scope" value="Bacteria"/>
</dbReference>
<dbReference type="HOGENOM" id="CLU_046483_2_0_5"/>
<dbReference type="OrthoDB" id="9803965at2"/>
<dbReference type="Proteomes" id="UP000006589">
    <property type="component" value="Chromosome"/>
</dbReference>
<dbReference type="GO" id="GO:0022627">
    <property type="term" value="C:cytosolic small ribosomal subunit"/>
    <property type="evidence" value="ECO:0007669"/>
    <property type="project" value="TreeGrafter"/>
</dbReference>
<dbReference type="GO" id="GO:0003723">
    <property type="term" value="F:RNA binding"/>
    <property type="evidence" value="ECO:0007669"/>
    <property type="project" value="TreeGrafter"/>
</dbReference>
<dbReference type="GO" id="GO:0003735">
    <property type="term" value="F:structural constituent of ribosome"/>
    <property type="evidence" value="ECO:0007669"/>
    <property type="project" value="InterPro"/>
</dbReference>
<dbReference type="GO" id="GO:0006412">
    <property type="term" value="P:translation"/>
    <property type="evidence" value="ECO:0007669"/>
    <property type="project" value="UniProtKB-UniRule"/>
</dbReference>
<dbReference type="FunFam" id="3.30.230.10:FF:000001">
    <property type="entry name" value="30S ribosomal protein S9"/>
    <property type="match status" value="1"/>
</dbReference>
<dbReference type="Gene3D" id="3.30.230.10">
    <property type="match status" value="1"/>
</dbReference>
<dbReference type="HAMAP" id="MF_00532_B">
    <property type="entry name" value="Ribosomal_uS9_B"/>
    <property type="match status" value="1"/>
</dbReference>
<dbReference type="InterPro" id="IPR020568">
    <property type="entry name" value="Ribosomal_Su5_D2-typ_SF"/>
</dbReference>
<dbReference type="InterPro" id="IPR000754">
    <property type="entry name" value="Ribosomal_uS9"/>
</dbReference>
<dbReference type="InterPro" id="IPR023035">
    <property type="entry name" value="Ribosomal_uS9_bac/plastid"/>
</dbReference>
<dbReference type="InterPro" id="IPR020574">
    <property type="entry name" value="Ribosomal_uS9_CS"/>
</dbReference>
<dbReference type="InterPro" id="IPR014721">
    <property type="entry name" value="Ribsml_uS5_D2-typ_fold_subgr"/>
</dbReference>
<dbReference type="NCBIfam" id="NF001099">
    <property type="entry name" value="PRK00132.1"/>
    <property type="match status" value="1"/>
</dbReference>
<dbReference type="PANTHER" id="PTHR21569">
    <property type="entry name" value="RIBOSOMAL PROTEIN S9"/>
    <property type="match status" value="1"/>
</dbReference>
<dbReference type="PANTHER" id="PTHR21569:SF1">
    <property type="entry name" value="SMALL RIBOSOMAL SUBUNIT PROTEIN US9M"/>
    <property type="match status" value="1"/>
</dbReference>
<dbReference type="Pfam" id="PF00380">
    <property type="entry name" value="Ribosomal_S9"/>
    <property type="match status" value="1"/>
</dbReference>
<dbReference type="SUPFAM" id="SSF54211">
    <property type="entry name" value="Ribosomal protein S5 domain 2-like"/>
    <property type="match status" value="1"/>
</dbReference>
<dbReference type="PROSITE" id="PS00360">
    <property type="entry name" value="RIBOSOMAL_S9"/>
    <property type="match status" value="1"/>
</dbReference>
<reference key="1">
    <citation type="submission" date="2008-03" db="EMBL/GenBank/DDBJ databases">
        <title>Complete sequence of chromosome of Methylobacterium radiotolerans JCM 2831.</title>
        <authorList>
            <consortium name="US DOE Joint Genome Institute"/>
            <person name="Copeland A."/>
            <person name="Lucas S."/>
            <person name="Lapidus A."/>
            <person name="Glavina del Rio T."/>
            <person name="Dalin E."/>
            <person name="Tice H."/>
            <person name="Bruce D."/>
            <person name="Goodwin L."/>
            <person name="Pitluck S."/>
            <person name="Kiss H."/>
            <person name="Brettin T."/>
            <person name="Detter J.C."/>
            <person name="Han C."/>
            <person name="Kuske C.R."/>
            <person name="Schmutz J."/>
            <person name="Larimer F."/>
            <person name="Land M."/>
            <person name="Hauser L."/>
            <person name="Kyrpides N."/>
            <person name="Mikhailova N."/>
            <person name="Marx C.J."/>
            <person name="Richardson P."/>
        </authorList>
    </citation>
    <scope>NUCLEOTIDE SEQUENCE [LARGE SCALE GENOMIC DNA]</scope>
    <source>
        <strain>ATCC 27329 / DSM 1819 / JCM 2831 / NBRC 15690 / NCIMB 10815 / 0-1</strain>
    </source>
</reference>
<name>RS9_METRJ</name>
<evidence type="ECO:0000255" key="1">
    <source>
        <dbReference type="HAMAP-Rule" id="MF_00532"/>
    </source>
</evidence>
<evidence type="ECO:0000305" key="2"/>
<comment type="similarity">
    <text evidence="1">Belongs to the universal ribosomal protein uS9 family.</text>
</comment>
<gene>
    <name evidence="1" type="primary">rpsI</name>
    <name type="ordered locus">Mrad2831_1179</name>
</gene>
<keyword id="KW-0687">Ribonucleoprotein</keyword>
<keyword id="KW-0689">Ribosomal protein</keyword>
<accession>B1M201</accession>
<protein>
    <recommendedName>
        <fullName evidence="1">Small ribosomal subunit protein uS9</fullName>
    </recommendedName>
    <alternativeName>
        <fullName evidence="2">30S ribosomal protein S9</fullName>
    </alternativeName>
</protein>
<sequence>MATLQSLADLNRSNTGAVDPANEAPVHVQKLDAQGRAYATGKRKDAVARVWIKPGNGTVTINKRPVETYFARPVLRMILRQPLEIAGRVDQYDITVTVAGGGLSGQAGAVRHGLSKALTYYEPELRAPLKREGFLTRDARVVERKKYGRKKARRSFQFSKR</sequence>